<keyword id="KW-0233">DNA recombination</keyword>
<keyword id="KW-0238">DNA-binding</keyword>
<keyword id="KW-0804">Transcription</keyword>
<keyword id="KW-0805">Transcription regulation</keyword>
<keyword id="KW-0810">Translation regulation</keyword>
<reference key="1">
    <citation type="journal article" date="1996" name="J. Bacteriol.">
        <title>Structure and function of the Pseudomonas putida integration host factor.</title>
        <authorList>
            <person name="Calb R."/>
            <person name="Davidovitch A."/>
            <person name="Koby S."/>
            <person name="Giladi H."/>
            <person name="Goldenberg D."/>
            <person name="Margalit H."/>
            <person name="Holtel A."/>
            <person name="Timmis K.N."/>
            <person name="Sanchez-Romero J.M."/>
            <person name="de Lorenzo V."/>
            <person name="Oppenheim A.B."/>
        </authorList>
    </citation>
    <scope>NUCLEOTIDE SEQUENCE [GENOMIC DNA]</scope>
</reference>
<dbReference type="EMBL" id="U56904">
    <property type="protein sequence ID" value="AAB04060.1"/>
    <property type="molecule type" value="Genomic_DNA"/>
</dbReference>
<dbReference type="RefSeq" id="WP_003250679.1">
    <property type="nucleotide sequence ID" value="NZ_WOWR01000033.1"/>
</dbReference>
<dbReference type="SMR" id="P0A127"/>
<dbReference type="GeneID" id="97167552"/>
<dbReference type="eggNOG" id="COG0776">
    <property type="taxonomic scope" value="Bacteria"/>
</dbReference>
<dbReference type="OMA" id="EMLFDQV"/>
<dbReference type="OrthoDB" id="9797747at2"/>
<dbReference type="GO" id="GO:0005829">
    <property type="term" value="C:cytosol"/>
    <property type="evidence" value="ECO:0007669"/>
    <property type="project" value="TreeGrafter"/>
</dbReference>
<dbReference type="GO" id="GO:0003677">
    <property type="term" value="F:DNA binding"/>
    <property type="evidence" value="ECO:0007669"/>
    <property type="project" value="UniProtKB-UniRule"/>
</dbReference>
<dbReference type="GO" id="GO:0030527">
    <property type="term" value="F:structural constituent of chromatin"/>
    <property type="evidence" value="ECO:0007669"/>
    <property type="project" value="InterPro"/>
</dbReference>
<dbReference type="GO" id="GO:0006310">
    <property type="term" value="P:DNA recombination"/>
    <property type="evidence" value="ECO:0007669"/>
    <property type="project" value="UniProtKB-UniRule"/>
</dbReference>
<dbReference type="GO" id="GO:0009893">
    <property type="term" value="P:positive regulation of metabolic process"/>
    <property type="evidence" value="ECO:0007669"/>
    <property type="project" value="UniProtKB-ARBA"/>
</dbReference>
<dbReference type="GO" id="GO:0006355">
    <property type="term" value="P:regulation of DNA-templated transcription"/>
    <property type="evidence" value="ECO:0007669"/>
    <property type="project" value="UniProtKB-UniRule"/>
</dbReference>
<dbReference type="GO" id="GO:0006417">
    <property type="term" value="P:regulation of translation"/>
    <property type="evidence" value="ECO:0007669"/>
    <property type="project" value="UniProtKB-UniRule"/>
</dbReference>
<dbReference type="CDD" id="cd13835">
    <property type="entry name" value="IHF_A"/>
    <property type="match status" value="1"/>
</dbReference>
<dbReference type="FunFam" id="4.10.520.10:FF:000002">
    <property type="entry name" value="Integration host factor subunit alpha"/>
    <property type="match status" value="1"/>
</dbReference>
<dbReference type="Gene3D" id="4.10.520.10">
    <property type="entry name" value="IHF-like DNA-binding proteins"/>
    <property type="match status" value="1"/>
</dbReference>
<dbReference type="HAMAP" id="MF_00380">
    <property type="entry name" value="IHF_alpha"/>
    <property type="match status" value="1"/>
</dbReference>
<dbReference type="InterPro" id="IPR000119">
    <property type="entry name" value="Hist_DNA-bd"/>
</dbReference>
<dbReference type="InterPro" id="IPR020816">
    <property type="entry name" value="Histone-like_DNA-bd_CS"/>
</dbReference>
<dbReference type="InterPro" id="IPR010992">
    <property type="entry name" value="IHF-like_DNA-bd_dom_sf"/>
</dbReference>
<dbReference type="InterPro" id="IPR005684">
    <property type="entry name" value="IHF_alpha"/>
</dbReference>
<dbReference type="NCBIfam" id="TIGR00987">
    <property type="entry name" value="himA"/>
    <property type="match status" value="1"/>
</dbReference>
<dbReference type="NCBIfam" id="NF001401">
    <property type="entry name" value="PRK00285.1"/>
    <property type="match status" value="1"/>
</dbReference>
<dbReference type="PANTHER" id="PTHR33175">
    <property type="entry name" value="DNA-BINDING PROTEIN HU"/>
    <property type="match status" value="1"/>
</dbReference>
<dbReference type="PANTHER" id="PTHR33175:SF2">
    <property type="entry name" value="INTEGRATION HOST FACTOR SUBUNIT ALPHA"/>
    <property type="match status" value="1"/>
</dbReference>
<dbReference type="Pfam" id="PF00216">
    <property type="entry name" value="Bac_DNA_binding"/>
    <property type="match status" value="1"/>
</dbReference>
<dbReference type="PRINTS" id="PR01727">
    <property type="entry name" value="DNABINDINGHU"/>
</dbReference>
<dbReference type="SMART" id="SM00411">
    <property type="entry name" value="BHL"/>
    <property type="match status" value="1"/>
</dbReference>
<dbReference type="SUPFAM" id="SSF47729">
    <property type="entry name" value="IHF-like DNA-binding proteins"/>
    <property type="match status" value="1"/>
</dbReference>
<dbReference type="PROSITE" id="PS00045">
    <property type="entry name" value="HISTONE_LIKE"/>
    <property type="match status" value="1"/>
</dbReference>
<sequence>MGALTKAEMAERLYEELGLNKREAKELVELFFEEIRHALEENEQVKLSGFGNFDLRDKRQRPGRNPKTGEEIPITARRVVTFRPGQKLKARVEAYAGTKP</sequence>
<comment type="function">
    <text evidence="1">This protein is one of the two subunits of integration host factor, a specific DNA-binding protein that functions in genetic recombination as well as in transcriptional and translational control.</text>
</comment>
<comment type="subunit">
    <text>Heterodimer of an alpha and a beta chain.</text>
</comment>
<comment type="similarity">
    <text evidence="3">Belongs to the bacterial histone-like protein family.</text>
</comment>
<evidence type="ECO:0000250" key="1"/>
<evidence type="ECO:0000256" key="2">
    <source>
        <dbReference type="SAM" id="MobiDB-lite"/>
    </source>
</evidence>
<evidence type="ECO:0000305" key="3"/>
<feature type="chain" id="PRO_0000105019" description="Integration host factor subunit alpha">
    <location>
        <begin position="1"/>
        <end position="100"/>
    </location>
</feature>
<feature type="region of interest" description="Disordered" evidence="2">
    <location>
        <begin position="53"/>
        <end position="72"/>
    </location>
</feature>
<protein>
    <recommendedName>
        <fullName>Integration host factor subunit alpha</fullName>
        <shortName>IHF-alpha</shortName>
    </recommendedName>
</protein>
<proteinExistence type="inferred from homology"/>
<name>IHFA_PSEPU</name>
<gene>
    <name type="primary">ihfA</name>
    <name type="synonym">himA</name>
</gene>
<accession>P0A127</accession>
<accession>Q52284</accession>
<organism>
    <name type="scientific">Pseudomonas putida</name>
    <name type="common">Arthrobacter siderocapsulatus</name>
    <dbReference type="NCBI Taxonomy" id="303"/>
    <lineage>
        <taxon>Bacteria</taxon>
        <taxon>Pseudomonadati</taxon>
        <taxon>Pseudomonadota</taxon>
        <taxon>Gammaproteobacteria</taxon>
        <taxon>Pseudomonadales</taxon>
        <taxon>Pseudomonadaceae</taxon>
        <taxon>Pseudomonas</taxon>
    </lineage>
</organism>